<evidence type="ECO:0000250" key="1">
    <source>
        <dbReference type="UniProtKB" id="Q49A26"/>
    </source>
</evidence>
<evidence type="ECO:0000255" key="2">
    <source>
        <dbReference type="PIRSR" id="PIRSR000103-1"/>
    </source>
</evidence>
<evidence type="ECO:0000269" key="3">
    <source>
    </source>
</evidence>
<evidence type="ECO:0000303" key="4">
    <source>
    </source>
</evidence>
<evidence type="ECO:0000305" key="5"/>
<comment type="function">
    <text evidence="3">Nonribosomal peptide synthetase that mediates the biosynthesis of usterphenyllins and uscandidusins, p-terphenyl derivatives (PubMed:37607357). Within the pathway, ucdB alone catalyzes both reduction and dehydration of atromentin to form a terphenyl triol intermediate (PubMed:37607357). The pathway begin with the biosynthesis of 4-hydroxyphenylpyruvate (HPPA) from L-tyrosine, possibly by the aminotransferase ucdG. The nonribosomal peptide synthetase ucdA then condenses two HPPA units to produce atromentin. The key step in this pathway is the reduction and dehydration of atromentin to form a terphenyl triol intermediate, performed by the NAD-dependent dehydrogenase ucdB. Further O-methylation by the methyltransferase ucdC forms terphenyllin carrying two methoxy moieties at C-9 and C-12, and subsequent dihydroxylation at C-3 of ring A and C-15 of ring C by the flavin-dependent oxygenase ucdD leads to 3,15-dihydroxyterphenyllin. Prenylation by ucdE at position C-5 of ring A forms usterphenyllin B, and is followed by a second prenylation at position C-14 of ring C to form usterphenyllin A. The following furan ring formation that leads to uscandidusins A and B was proven to be an unexpected spontaneous non-enzymatic reaction (PubMed:37607357).</text>
</comment>
<comment type="pathway">
    <text evidence="3">Secondary metabolite biosynthesis.</text>
</comment>
<comment type="disruption phenotype">
    <text evidence="3">Impairs the production of usterphenyllins and uscandidusins, and leads to the accumulation of atromentin.</text>
</comment>
<comment type="similarity">
    <text evidence="5">Belongs to the HIBADH-related family. NP60 subfamily.</text>
</comment>
<feature type="chain" id="PRO_0000460396" description="NADH-dependent oxidoreductase ucdB">
    <location>
        <begin position="1"/>
        <end position="285"/>
    </location>
</feature>
<feature type="active site" evidence="2">
    <location>
        <position position="156"/>
    </location>
</feature>
<feature type="binding site" evidence="1">
    <location>
        <position position="87"/>
    </location>
    <ligand>
        <name>NAD(+)</name>
        <dbReference type="ChEBI" id="CHEBI:57540"/>
    </ligand>
</feature>
<organism>
    <name type="scientific">Aspergillus ustus</name>
    <dbReference type="NCBI Taxonomy" id="40382"/>
    <lineage>
        <taxon>Eukaryota</taxon>
        <taxon>Fungi</taxon>
        <taxon>Dikarya</taxon>
        <taxon>Ascomycota</taxon>
        <taxon>Pezizomycotina</taxon>
        <taxon>Eurotiomycetes</taxon>
        <taxon>Eurotiomycetidae</taxon>
        <taxon>Eurotiales</taxon>
        <taxon>Aspergillaceae</taxon>
        <taxon>Aspergillus</taxon>
        <taxon>Aspergillus subgen. Nidulantes</taxon>
    </lineage>
</organism>
<dbReference type="EC" id="1.1.1.-" evidence="3"/>
<dbReference type="EMBL" id="JOMC01000221">
    <property type="protein sequence ID" value="KIA75357.1"/>
    <property type="molecule type" value="Genomic_DNA"/>
</dbReference>
<dbReference type="SMR" id="A0A0C1E1C6"/>
<dbReference type="Proteomes" id="UP000053475">
    <property type="component" value="Unassembled WGS sequence"/>
</dbReference>
<dbReference type="GO" id="GO:0051287">
    <property type="term" value="F:NAD binding"/>
    <property type="evidence" value="ECO:0007669"/>
    <property type="project" value="InterPro"/>
</dbReference>
<dbReference type="GO" id="GO:0050661">
    <property type="term" value="F:NADP binding"/>
    <property type="evidence" value="ECO:0007669"/>
    <property type="project" value="InterPro"/>
</dbReference>
<dbReference type="GO" id="GO:0016491">
    <property type="term" value="F:oxidoreductase activity"/>
    <property type="evidence" value="ECO:0007669"/>
    <property type="project" value="UniProtKB-KW"/>
</dbReference>
<dbReference type="Gene3D" id="1.10.1040.10">
    <property type="entry name" value="N-(1-d-carboxylethyl)-l-norvaline Dehydrogenase, domain 2"/>
    <property type="match status" value="1"/>
</dbReference>
<dbReference type="Gene3D" id="3.40.50.720">
    <property type="entry name" value="NAD(P)-binding Rossmann-like Domain"/>
    <property type="match status" value="1"/>
</dbReference>
<dbReference type="InterPro" id="IPR008927">
    <property type="entry name" value="6-PGluconate_DH-like_C_sf"/>
</dbReference>
<dbReference type="InterPro" id="IPR013328">
    <property type="entry name" value="6PGD_dom2"/>
</dbReference>
<dbReference type="InterPro" id="IPR006115">
    <property type="entry name" value="6PGDH_NADP-bd"/>
</dbReference>
<dbReference type="InterPro" id="IPR029154">
    <property type="entry name" value="HIBADH-like_NADP-bd"/>
</dbReference>
<dbReference type="InterPro" id="IPR015815">
    <property type="entry name" value="HIBADH-related"/>
</dbReference>
<dbReference type="InterPro" id="IPR051265">
    <property type="entry name" value="HIBADH-related_NP60_sf"/>
</dbReference>
<dbReference type="InterPro" id="IPR036291">
    <property type="entry name" value="NAD(P)-bd_dom_sf"/>
</dbReference>
<dbReference type="PANTHER" id="PTHR43580:SF8">
    <property type="entry name" value="6-PHOSPHOGLUCONATE DEHYDROGENASE NADP-BINDING DOMAIN-CONTAINING PROTEIN-RELATED"/>
    <property type="match status" value="1"/>
</dbReference>
<dbReference type="PANTHER" id="PTHR43580">
    <property type="entry name" value="OXIDOREDUCTASE GLYR1-RELATED"/>
    <property type="match status" value="1"/>
</dbReference>
<dbReference type="Pfam" id="PF14833">
    <property type="entry name" value="NAD_binding_11"/>
    <property type="match status" value="1"/>
</dbReference>
<dbReference type="Pfam" id="PF03446">
    <property type="entry name" value="NAD_binding_2"/>
    <property type="match status" value="1"/>
</dbReference>
<dbReference type="PIRSF" id="PIRSF000103">
    <property type="entry name" value="HIBADH"/>
    <property type="match status" value="1"/>
</dbReference>
<dbReference type="SUPFAM" id="SSF48179">
    <property type="entry name" value="6-phosphogluconate dehydrogenase C-terminal domain-like"/>
    <property type="match status" value="1"/>
</dbReference>
<dbReference type="SUPFAM" id="SSF51735">
    <property type="entry name" value="NAD(P)-binding Rossmann-fold domains"/>
    <property type="match status" value="1"/>
</dbReference>
<gene>
    <name evidence="4" type="primary">ucdB</name>
    <name type="ORF">HK57_00186</name>
</gene>
<protein>
    <recommendedName>
        <fullName evidence="4">NADH-dependent oxidoreductase ucdB</fullName>
        <ecNumber evidence="3">1.1.1.-</ecNumber>
    </recommendedName>
    <alternativeName>
        <fullName evidence="4">Uscandidusin biosynthesis cluster protein B</fullName>
    </alternativeName>
</protein>
<name>UCDB_ASPUT</name>
<accession>A0A0C1E1C6</accession>
<keyword id="KW-0520">NAD</keyword>
<keyword id="KW-0560">Oxidoreductase</keyword>
<keyword id="KW-1185">Reference proteome</keyword>
<reference key="1">
    <citation type="submission" date="2014-11" db="EMBL/GenBank/DDBJ databases">
        <title>Genomics derived discovery of secondary metabolites biosynthetic gene clusters in Aspergillus ustus.</title>
        <authorList>
            <person name="Pi B."/>
            <person name="Dai F."/>
            <person name="Song X."/>
            <person name="Zhu C."/>
            <person name="Li H."/>
            <person name="Yu D."/>
        </authorList>
    </citation>
    <scope>NUCLEOTIDE SEQUENCE [LARGE SCALE GENOMIC DNA]</scope>
    <source>
        <strain>3.3904</strain>
    </source>
</reference>
<reference key="2">
    <citation type="journal article" date="2023" name="Org. Lett.">
        <title>Biosynthesis of p-terphenyls in Aspergillus ustus implies enzymatic reductive dehydration and spontaneous dibenzofuran formation.</title>
        <authorList>
            <person name="Janzen D.J."/>
            <person name="Zhou J."/>
            <person name="Li S.M."/>
        </authorList>
    </citation>
    <scope>FUNCTION</scope>
    <scope>CATALYTIC ACTIVITY</scope>
    <scope>DISRUPTION PHENOTYPE</scope>
    <scope>PATHWAY</scope>
</reference>
<sequence>MGMAMSENLLRYGNVAKPLVLYNRTREKAEAHSSRLGDCEVANSLPAAVSVSDIIWLCLQDQTAVEETFQEILPAEIRSKLFVDSSTTNPETADSIARRLSDRGAFFVALPVMGGPPLALSRSLTCIASGDRESVDRIRPYIEGVGEKPGAALLLKLLGNFLIMATIETVAEAHAFAEKCGIDTTNMDKLLRAVFPLPPHALYNRQMVTGECFSGKPLVEVSKALQLTGHVMEMAKKHGASVKIYEIARQHLEIVQENAGPDADITAIYGAVRMESGLPFSTITE</sequence>
<proteinExistence type="evidence at protein level"/>